<proteinExistence type="inferred from homology"/>
<name>PTH_LIMRJ</name>
<sequence>MKMIVGLGNIGTRYDETRHNTGFMVVDQLARDYHLGAFTHLKQEAVAVSGVINGEKVMLVKPTTFMNDSGRAVGPLVDYYDIDLDDLVIVNDDLDMPVGKVRLKTHGASGGHNGLKSIISVLGTKNFNRVKVGIDHPQHGTVVSHVLGKFSKEERPKFDQAVEQAEHALEDWINGEDFAKLMNAYN</sequence>
<feature type="chain" id="PRO_1000092953" description="Peptidyl-tRNA hydrolase">
    <location>
        <begin position="1"/>
        <end position="186"/>
    </location>
</feature>
<feature type="active site" description="Proton acceptor" evidence="1">
    <location>
        <position position="19"/>
    </location>
</feature>
<feature type="binding site" evidence="1">
    <location>
        <position position="14"/>
    </location>
    <ligand>
        <name>tRNA</name>
        <dbReference type="ChEBI" id="CHEBI:17843"/>
    </ligand>
</feature>
<feature type="binding site" evidence="1">
    <location>
        <position position="65"/>
    </location>
    <ligand>
        <name>tRNA</name>
        <dbReference type="ChEBI" id="CHEBI:17843"/>
    </ligand>
</feature>
<feature type="binding site" evidence="1">
    <location>
        <position position="67"/>
    </location>
    <ligand>
        <name>tRNA</name>
        <dbReference type="ChEBI" id="CHEBI:17843"/>
    </ligand>
</feature>
<feature type="binding site" evidence="1">
    <location>
        <position position="113"/>
    </location>
    <ligand>
        <name>tRNA</name>
        <dbReference type="ChEBI" id="CHEBI:17843"/>
    </ligand>
</feature>
<feature type="site" description="Discriminates between blocked and unblocked aminoacyl-tRNA" evidence="1">
    <location>
        <position position="9"/>
    </location>
</feature>
<feature type="site" description="Stabilizes the basic form of H active site to accept a proton" evidence="1">
    <location>
        <position position="92"/>
    </location>
</feature>
<evidence type="ECO:0000255" key="1">
    <source>
        <dbReference type="HAMAP-Rule" id="MF_00083"/>
    </source>
</evidence>
<organism>
    <name type="scientific">Limosilactobacillus reuteri subsp. reuteri (strain JCM 1112)</name>
    <name type="common">Lactobacillus reuteri</name>
    <dbReference type="NCBI Taxonomy" id="557433"/>
    <lineage>
        <taxon>Bacteria</taxon>
        <taxon>Bacillati</taxon>
        <taxon>Bacillota</taxon>
        <taxon>Bacilli</taxon>
        <taxon>Lactobacillales</taxon>
        <taxon>Lactobacillaceae</taxon>
        <taxon>Limosilactobacillus</taxon>
    </lineage>
</organism>
<accession>B2G5N5</accession>
<reference key="1">
    <citation type="journal article" date="2008" name="DNA Res.">
        <title>Comparative genome analysis of Lactobacillus reuteri and Lactobacillus fermentum reveal a genomic island for reuterin and cobalamin production.</title>
        <authorList>
            <person name="Morita H."/>
            <person name="Toh H."/>
            <person name="Fukuda S."/>
            <person name="Horikawa H."/>
            <person name="Oshima K."/>
            <person name="Suzuki T."/>
            <person name="Murakami M."/>
            <person name="Hisamatsu S."/>
            <person name="Kato Y."/>
            <person name="Takizawa T."/>
            <person name="Fukuoka H."/>
            <person name="Yoshimura T."/>
            <person name="Itoh K."/>
            <person name="O'Sullivan D.J."/>
            <person name="McKay L.L."/>
            <person name="Ohno H."/>
            <person name="Kikuchi J."/>
            <person name="Masaoka T."/>
            <person name="Hattori M."/>
        </authorList>
    </citation>
    <scope>NUCLEOTIDE SEQUENCE [LARGE SCALE GENOMIC DNA]</scope>
    <source>
        <strain>JCM 1112</strain>
    </source>
</reference>
<keyword id="KW-0963">Cytoplasm</keyword>
<keyword id="KW-0378">Hydrolase</keyword>
<keyword id="KW-0694">RNA-binding</keyword>
<keyword id="KW-0820">tRNA-binding</keyword>
<gene>
    <name evidence="1" type="primary">pth</name>
    <name type="ordered locus">LAR_0251</name>
</gene>
<comment type="function">
    <text evidence="1">Hydrolyzes ribosome-free peptidyl-tRNAs (with 1 or more amino acids incorporated), which drop off the ribosome during protein synthesis, or as a result of ribosome stalling.</text>
</comment>
<comment type="function">
    <text evidence="1">Catalyzes the release of premature peptidyl moieties from peptidyl-tRNA molecules trapped in stalled 50S ribosomal subunits, and thus maintains levels of free tRNAs and 50S ribosomes.</text>
</comment>
<comment type="catalytic activity">
    <reaction evidence="1">
        <text>an N-acyl-L-alpha-aminoacyl-tRNA + H2O = an N-acyl-L-amino acid + a tRNA + H(+)</text>
        <dbReference type="Rhea" id="RHEA:54448"/>
        <dbReference type="Rhea" id="RHEA-COMP:10123"/>
        <dbReference type="Rhea" id="RHEA-COMP:13883"/>
        <dbReference type="ChEBI" id="CHEBI:15377"/>
        <dbReference type="ChEBI" id="CHEBI:15378"/>
        <dbReference type="ChEBI" id="CHEBI:59874"/>
        <dbReference type="ChEBI" id="CHEBI:78442"/>
        <dbReference type="ChEBI" id="CHEBI:138191"/>
        <dbReference type="EC" id="3.1.1.29"/>
    </reaction>
</comment>
<comment type="subunit">
    <text evidence="1">Monomer.</text>
</comment>
<comment type="subcellular location">
    <subcellularLocation>
        <location evidence="1">Cytoplasm</location>
    </subcellularLocation>
</comment>
<comment type="similarity">
    <text evidence="1">Belongs to the PTH family.</text>
</comment>
<protein>
    <recommendedName>
        <fullName evidence="1">Peptidyl-tRNA hydrolase</fullName>
        <shortName evidence="1">Pth</shortName>
        <ecNumber evidence="1">3.1.1.29</ecNumber>
    </recommendedName>
</protein>
<dbReference type="EC" id="3.1.1.29" evidence="1"/>
<dbReference type="EMBL" id="AP007281">
    <property type="protein sequence ID" value="BAG24767.1"/>
    <property type="molecule type" value="Genomic_DNA"/>
</dbReference>
<dbReference type="RefSeq" id="WP_011953390.1">
    <property type="nucleotide sequence ID" value="NC_010609.1"/>
</dbReference>
<dbReference type="SMR" id="B2G5N5"/>
<dbReference type="KEGG" id="lrf:LAR_0251"/>
<dbReference type="HOGENOM" id="CLU_062456_4_1_9"/>
<dbReference type="GO" id="GO:0005737">
    <property type="term" value="C:cytoplasm"/>
    <property type="evidence" value="ECO:0007669"/>
    <property type="project" value="UniProtKB-SubCell"/>
</dbReference>
<dbReference type="GO" id="GO:0004045">
    <property type="term" value="F:peptidyl-tRNA hydrolase activity"/>
    <property type="evidence" value="ECO:0007669"/>
    <property type="project" value="UniProtKB-UniRule"/>
</dbReference>
<dbReference type="GO" id="GO:0000049">
    <property type="term" value="F:tRNA binding"/>
    <property type="evidence" value="ECO:0007669"/>
    <property type="project" value="UniProtKB-UniRule"/>
</dbReference>
<dbReference type="GO" id="GO:0006515">
    <property type="term" value="P:protein quality control for misfolded or incompletely synthesized proteins"/>
    <property type="evidence" value="ECO:0007669"/>
    <property type="project" value="UniProtKB-UniRule"/>
</dbReference>
<dbReference type="GO" id="GO:0072344">
    <property type="term" value="P:rescue of stalled ribosome"/>
    <property type="evidence" value="ECO:0007669"/>
    <property type="project" value="UniProtKB-UniRule"/>
</dbReference>
<dbReference type="CDD" id="cd00462">
    <property type="entry name" value="PTH"/>
    <property type="match status" value="1"/>
</dbReference>
<dbReference type="FunFam" id="3.40.50.1470:FF:000001">
    <property type="entry name" value="Peptidyl-tRNA hydrolase"/>
    <property type="match status" value="1"/>
</dbReference>
<dbReference type="Gene3D" id="3.40.50.1470">
    <property type="entry name" value="Peptidyl-tRNA hydrolase"/>
    <property type="match status" value="1"/>
</dbReference>
<dbReference type="HAMAP" id="MF_00083">
    <property type="entry name" value="Pept_tRNA_hydro_bact"/>
    <property type="match status" value="1"/>
</dbReference>
<dbReference type="InterPro" id="IPR001328">
    <property type="entry name" value="Pept_tRNA_hydro"/>
</dbReference>
<dbReference type="InterPro" id="IPR018171">
    <property type="entry name" value="Pept_tRNA_hydro_CS"/>
</dbReference>
<dbReference type="InterPro" id="IPR036416">
    <property type="entry name" value="Pept_tRNA_hydro_sf"/>
</dbReference>
<dbReference type="NCBIfam" id="TIGR00447">
    <property type="entry name" value="pth"/>
    <property type="match status" value="1"/>
</dbReference>
<dbReference type="PANTHER" id="PTHR17224">
    <property type="entry name" value="PEPTIDYL-TRNA HYDROLASE"/>
    <property type="match status" value="1"/>
</dbReference>
<dbReference type="PANTHER" id="PTHR17224:SF1">
    <property type="entry name" value="PEPTIDYL-TRNA HYDROLASE"/>
    <property type="match status" value="1"/>
</dbReference>
<dbReference type="Pfam" id="PF01195">
    <property type="entry name" value="Pept_tRNA_hydro"/>
    <property type="match status" value="1"/>
</dbReference>
<dbReference type="SUPFAM" id="SSF53178">
    <property type="entry name" value="Peptidyl-tRNA hydrolase-like"/>
    <property type="match status" value="1"/>
</dbReference>
<dbReference type="PROSITE" id="PS01195">
    <property type="entry name" value="PEPT_TRNA_HYDROL_1"/>
    <property type="match status" value="1"/>
</dbReference>